<reference key="1">
    <citation type="journal article" date="1986" name="Proc. Natl. Acad. Sci. U.S.A.">
        <title>Murine myb protooncogene mRNA: cDNA sequence and evidence for 5' heterogeneity.</title>
        <authorList>
            <person name="Bender T.P."/>
            <person name="Kuehl W.M."/>
        </authorList>
    </citation>
    <scope>NUCLEOTIDE SEQUENCE [GENOMIC DNA / MRNA]</scope>
</reference>
<reference key="2">
    <citation type="journal article" date="1985" name="EMBO J.">
        <title>Nucleotide sequence of cDNA clones of the murine myb proto-oncogene.</title>
        <authorList>
            <person name="Gonda T.J."/>
            <person name="Gough N.M."/>
            <person name="Dunn A.R."/>
            <person name="de Blaquiere J."/>
        </authorList>
    </citation>
    <scope>NUCLEOTIDE SEQUENCE [MRNA]</scope>
</reference>
<reference key="3">
    <citation type="journal article" date="1987" name="EMBO J.">
        <title>Multiple c-myb transcript cap sites are variously utilized in cells of mouse haemopoietic origin.</title>
        <authorList>
            <person name="Watson R.J."/>
            <person name="Dyson P.J."/>
            <person name="McMahon J."/>
        </authorList>
    </citation>
    <scope>NUCLEOTIDE SEQUENCE [MRNA]</scope>
</reference>
<reference key="4">
    <citation type="journal article" date="1987" name="Proc. Natl. Acad. Sci. U.S.A.">
        <title>Aberrant splicing events that are induced by proviral integration: implications for myb oncogene activation.</title>
        <authorList>
            <person name="Rosson D."/>
            <person name="Dugan D."/>
            <person name="Reddy E.P."/>
        </authorList>
    </citation>
    <scope>NUCLEOTIDE SEQUENCE [MRNA]</scope>
</reference>
<reference key="5">
    <citation type="journal article" date="2009" name="PLoS Biol.">
        <title>Lineage-specific biology revealed by a finished genome assembly of the mouse.</title>
        <authorList>
            <person name="Church D.M."/>
            <person name="Goodstadt L."/>
            <person name="Hillier L.W."/>
            <person name="Zody M.C."/>
            <person name="Goldstein S."/>
            <person name="She X."/>
            <person name="Bult C.J."/>
            <person name="Agarwala R."/>
            <person name="Cherry J.L."/>
            <person name="DiCuccio M."/>
            <person name="Hlavina W."/>
            <person name="Kapustin Y."/>
            <person name="Meric P."/>
            <person name="Maglott D."/>
            <person name="Birtle Z."/>
            <person name="Marques A.C."/>
            <person name="Graves T."/>
            <person name="Zhou S."/>
            <person name="Teague B."/>
            <person name="Potamousis K."/>
            <person name="Churas C."/>
            <person name="Place M."/>
            <person name="Herschleb J."/>
            <person name="Runnheim R."/>
            <person name="Forrest D."/>
            <person name="Amos-Landgraf J."/>
            <person name="Schwartz D.C."/>
            <person name="Cheng Z."/>
            <person name="Lindblad-Toh K."/>
            <person name="Eichler E.E."/>
            <person name="Ponting C.P."/>
        </authorList>
    </citation>
    <scope>NUCLEOTIDE SEQUENCE [LARGE SCALE GENOMIC DNA]</scope>
    <source>
        <strain>C57BL/6J</strain>
    </source>
</reference>
<reference key="6">
    <citation type="journal article" date="2004" name="Genome Res.">
        <title>The status, quality, and expansion of the NIH full-length cDNA project: the Mammalian Gene Collection (MGC).</title>
        <authorList>
            <consortium name="The MGC Project Team"/>
        </authorList>
    </citation>
    <scope>NUCLEOTIDE SEQUENCE [LARGE SCALE MRNA]</scope>
    <source>
        <strain>FVB/N</strain>
        <tissue>Mammary gland</tissue>
    </source>
</reference>
<reference key="7">
    <citation type="journal article" date="1989" name="Nucleic Acids Res.">
        <title>Structure and biological activity of the transcriptional initiation sequences of the murine c-myb oncogene.</title>
        <authorList>
            <person name="Sobieszczuk P.W."/>
            <person name="Gonda T.J."/>
            <person name="Dunn A.R."/>
        </authorList>
    </citation>
    <scope>NUCLEOTIDE SEQUENCE [GENOMIC DNA] OF 1-47</scope>
</reference>
<reference key="8">
    <citation type="journal article" date="1986" name="Mol. Cell. Biol.">
        <title>Two modes of c-myb activation in virus-induced mouse myeloid tumors.</title>
        <authorList>
            <person name="Shen-Ong G.L.C."/>
            <person name="Morse H.C. III"/>
            <person name="Potter M."/>
            <person name="Mushinski F."/>
        </authorList>
    </citation>
    <scope>NUCLEOTIDE SEQUENCE [MRNA] OF 72-636</scope>
</reference>
<reference key="9">
    <citation type="journal article" date="1986" name="Nucleic Acids Res.">
        <title>Structural organization and nucleotide sequence of mouse c-myb oncogene: activation in ABPL tumors is due to viral integration in an intron which results in the deletion of the 5' coding sequences.</title>
        <authorList>
            <person name="Lavu S."/>
            <person name="Reddy E.P."/>
        </authorList>
    </citation>
    <scope>NUCLEOTIDE SEQUENCE [GENOMIC DNA] OF 72-401</scope>
</reference>
<reference key="10">
    <citation type="journal article" date="1986" name="Proc. Natl. Acad. Sci. U.S.A.">
        <title>Truncation of the c-myb gene by a retroviral integration in an interleukin 3-dependent myeloid leukemia cell line.</title>
        <authorList>
            <person name="Weinstein Y."/>
            <person name="Ihle J.N."/>
            <person name="Lavu S."/>
            <person name="Reddy P.E."/>
        </authorList>
    </citation>
    <scope>NUCLEOTIDE SEQUENCE [GENOMIC DNA] OF 388-402</scope>
</reference>
<reference key="11">
    <citation type="journal article" date="1989" name="EMBO J.">
        <title>Activation of c-myb by carboxy-terminal truncation: relationship to transformation of murine haemopoietic cells in vitro.</title>
        <authorList>
            <person name="Gonda T.J."/>
            <person name="Buckmaster C."/>
            <person name="Ramsay R.G."/>
        </authorList>
    </citation>
    <scope>DOMAIN C-TERMINAL</scope>
</reference>
<reference key="12">
    <citation type="journal article" date="1991" name="Oncogene">
        <title>Transformation by carboxyl-deleted Myb reflects increased transactivating capacity and disruption of a negative regulatory domain.</title>
        <authorList>
            <person name="Hu Y."/>
            <person name="Ramsay R.G."/>
            <person name="Kanei-Ishii C."/>
            <person name="Ishii S."/>
            <person name="Gonda T.J."/>
        </authorList>
    </citation>
    <scope>NEGATIVE REGULATORY DOMAIN</scope>
</reference>
<reference key="13">
    <citation type="journal article" date="1993" name="J. Biol. Chem.">
        <title>Negative autoregulation of c-Myb activity by homodimer formation through the leucine zipper.</title>
        <authorList>
            <person name="Nomura T."/>
            <person name="Sakai N."/>
            <person name="Sarai A."/>
            <person name="Sudo T."/>
            <person name="Kanei-Ishii C."/>
            <person name="Ramsay R.G."/>
            <person name="Favier D."/>
            <person name="Gonda T.J."/>
            <person name="Ishii S."/>
        </authorList>
    </citation>
    <scope>DOMAIN LEUCINE-ZIPPER</scope>
    <scope>NEGATIVE AUTOREGULATION</scope>
</reference>
<reference key="14">
    <citation type="journal article" date="1998" name="Mol. Cell. Biol.">
        <title>Molecular cloning reveals that the p160 Myb-binding protein is a novel, predominantly nucleolar protein which may play a role in transactivation by Myb.</title>
        <authorList>
            <person name="Tavner F.J."/>
            <person name="Simpson R."/>
            <person name="Tashiro S."/>
            <person name="Favier D."/>
            <person name="Jenkins N.A."/>
            <person name="Gilbert D.J."/>
            <person name="Copeland N.G."/>
            <person name="Macmillan E.M."/>
            <person name="Lutwyche J."/>
            <person name="Keough R.A."/>
            <person name="Ishii S."/>
            <person name="Gonda T.J."/>
        </authorList>
    </citation>
    <scope>INTERACTION WITH MYBBP1A1</scope>
</reference>
<reference key="15">
    <citation type="journal article" date="1998" name="Mol. Cell. Biol.">
        <title>c-Maf interacts with c-Myb to regulate transcription of an early myeloid gene during differentiation.</title>
        <authorList>
            <person name="Hedge S.P."/>
            <person name="Kumar A."/>
            <person name="Kurschner C."/>
            <person name="Shapiro L.H."/>
        </authorList>
    </citation>
    <scope>INTERACTION WITH MAF</scope>
</reference>
<reference key="16">
    <citation type="journal article" date="2004" name="Genes Dev.">
        <title>Wnt-1 signal induces phosphorylation and degradation of c-Myb protein via TAK1, HIPK2, and NLK.</title>
        <authorList>
            <person name="Kanei-Ishii C."/>
            <person name="Ninomiya-Tsuji J."/>
            <person name="Tanikawa J."/>
            <person name="Nomura T."/>
            <person name="Ishitani T."/>
            <person name="Kishida S."/>
            <person name="Kokura K."/>
            <person name="Kurahashi T."/>
            <person name="Ichikawa-Iwata E."/>
            <person name="Kim Y."/>
            <person name="Matsumoto K."/>
            <person name="Ishii S."/>
        </authorList>
    </citation>
    <scope>INTERACTION WITH HIPK2 AND NLK</scope>
</reference>
<reference key="17">
    <citation type="journal article" date="2005" name="Mol. Biol. Cell">
        <title>TRAF7 sequesters c-Myb to the cytoplasm by stimulating its sumoylation.</title>
        <authorList>
            <person name="Morita Y."/>
            <person name="Kanei-Ishii C."/>
            <person name="Nomura T."/>
            <person name="Ishii S."/>
        </authorList>
    </citation>
    <scope>FUNCTION</scope>
    <scope>MUTAGENESIS OF LYS-499 AND LYS-523</scope>
    <scope>SUMOYLATION AT LYS-499 AND LYS-523</scope>
    <scope>SUBCELLULAR LOCATION</scope>
</reference>
<reference key="18">
    <citation type="journal article" date="2007" name="Eur. J. Immunol.">
        <title>c-Maf interacts with c-Myb to down-regulate Bcl-2 expression and increase apoptosis in peripheral CD4 cells.</title>
        <authorList>
            <person name="Peng S."/>
            <person name="Lalani S."/>
            <person name="Leavenworth J.W."/>
            <person name="Ho I.-C."/>
            <person name="Pauza M.E."/>
        </authorList>
    </citation>
    <scope>INTERACTION WITH MAF</scope>
</reference>
<reference key="19">
    <citation type="journal article" date="1992" name="Proc. Natl. Acad. Sci. U.S.A.">
        <title>Solution structure of a DNA-binding unit of Myb: a helix-turn-helix-related motif with conserved tryptophans forming a hydrophobic core.</title>
        <authorList>
            <person name="Ogata K."/>
            <person name="Hojo H."/>
            <person name="Aimoto S."/>
            <person name="Nakai T."/>
            <person name="Nakamura H."/>
            <person name="Sarai A."/>
            <person name="Ishii S."/>
            <person name="Nishimura Y."/>
        </authorList>
    </citation>
    <scope>STRUCTURE BY NMR OF 142-193</scope>
</reference>
<reference key="20">
    <citation type="journal article" date="1993" name="Eur. J. Biochem.">
        <title>Secondary structure of the DNA-binding domain of the c-Myb oncoprotein in solution. A multidimensional double and triple heteronuclear NMR study.</title>
        <authorList>
            <person name="Jamin N."/>
            <person name="Gabrielsen O.S."/>
            <person name="Gilles N."/>
            <person name="Lirsac P.-N."/>
            <person name="Toma F."/>
        </authorList>
    </citation>
    <scope>STRUCTURE BY NMR OF 89-192</scope>
</reference>
<reference key="21">
    <citation type="journal article" date="1995" name="Nat. Struct. Biol.">
        <title>Comparison of the free and DNA-complexed forms of the DNA-binding domain from c-Myb.</title>
        <authorList>
            <person name="Ogata K."/>
            <person name="Morikawa S."/>
            <person name="Nakamura H."/>
            <person name="Hojo H."/>
            <person name="Yoshimura S."/>
            <person name="Zhang R."/>
            <person name="Aimoto S."/>
            <person name="Ametani Y."/>
            <person name="Hirata Z."/>
            <person name="Sarai A."/>
            <person name="Ishii S."/>
            <person name="Nishimura Y."/>
        </authorList>
    </citation>
    <scope>STRUCTURE BY NMR OF 38-89; 90-141 AND 142-193</scope>
</reference>
<reference key="22">
    <citation type="journal article" date="1996" name="Proc. Natl. Acad. Sci. U.S.A.">
        <title>A small engineered protein lacks structural uniqueness by increasing the side-chain conformational entropy.</title>
        <authorList>
            <person name="Furukawa K."/>
            <person name="Oda M."/>
            <person name="Nakamura H."/>
        </authorList>
    </citation>
    <scope>STRUCTURE BY NMR OF 140-193</scope>
</reference>
<reference key="23">
    <citation type="journal article" date="2002" name="Cell">
        <title>Mechanism of c-Myb-C/EBP beta cooperation from separated sites on a promoter.</title>
        <authorList>
            <person name="Tahirov T.H."/>
            <person name="Sato K."/>
            <person name="Ichikawa-Iwata E."/>
            <person name="Sasaki M."/>
            <person name="Inoue-Bungo T."/>
            <person name="Shiina M."/>
            <person name="Kimura K."/>
            <person name="Takata S."/>
            <person name="Fujikawa A."/>
            <person name="Morii H."/>
            <person name="Kumasaka T."/>
            <person name="Yamamoto M."/>
            <person name="Ishii S."/>
            <person name="Ogata K."/>
        </authorList>
    </citation>
    <scope>X-RAY CRYSTALLOGRAPHY (2.8 ANGSTROMS) OF 35-193 IN COMPLEX WITH HUMAN CEBPB</scope>
</reference>
<gene>
    <name type="primary">Myb</name>
</gene>
<sequence length="636" mass="71422">MARRPRHSIYSSDEDDEDIEMCDHDYDGLLPKSGKRHLGKTRWTREEDEKLKKLVEQNGTDDWKVIANYLPNRTDVQCQHRWQKVLNPELIKGPWTKEEDQRVIELVQKYGPKRWSVIAKHLKGRIGKQCRERWHNHLNPEVKKTSWTEEEDRIIYQAHKRLGNRWAEIAKLLPGRTDNAIKNHWNSTMRRKVEQEGYLQEPSKASQTPVATSFQKNNHLMGFGHASPPSQLSPSGQSSVNSEYPYYHIAEAQNISSHVPYPVALHVNIVNVPQPAAAAIQRHYNDEDPEKEKRIKELELLLMSTENELKGQQALPTQNHTCSYPGWHSTSIVDQTRPHGDSAPVSCLGEHHATPSLPADPGSLPEESASPARCMIVHQGTILDNVKNLLEFAETLQFIDSFLNTSSNHESSGLDAPTLPSTPLIGHKLTPCRDQTVKTQKENSIFRTPAIKRSILESSPRTPTPFKHALAAQEIKYGPLKMLPQTPSHAVEDLQDVIKQESDESGIVAEFQESGPPLLKKIKQEVESPTEKSGNFFCSNHWAENSLSTQLFSQASPVADAPNILTSSVLMTPVSEDEDNVLKAFTVPKNRPLVGPLQPCSGAWEPASCGKTEDQMTASGPARKYVNAFSARTLVM</sequence>
<feature type="chain" id="PRO_0000197049" description="Transcriptional activator Myb">
    <location>
        <begin position="1"/>
        <end position="636"/>
    </location>
</feature>
<feature type="domain" description="HTH myb-type 1" evidence="3">
    <location>
        <begin position="35"/>
        <end position="86"/>
    </location>
</feature>
<feature type="domain" description="HTH myb-type 2" evidence="3">
    <location>
        <begin position="87"/>
        <end position="142"/>
    </location>
</feature>
<feature type="domain" description="HTH myb-type 3" evidence="3">
    <location>
        <begin position="143"/>
        <end position="193"/>
    </location>
</feature>
<feature type="DNA-binding region" description="H-T-H motif" evidence="3">
    <location>
        <begin position="63"/>
        <end position="86"/>
    </location>
</feature>
<feature type="DNA-binding region" description="H-T-H motif" evidence="3">
    <location>
        <begin position="115"/>
        <end position="138"/>
    </location>
</feature>
<feature type="DNA-binding region" description="H-T-H motif" evidence="3">
    <location>
        <begin position="166"/>
        <end position="189"/>
    </location>
</feature>
<feature type="region of interest" description="Interaction with HIPK2 and NLK" evidence="6">
    <location>
        <begin position="90"/>
        <end position="193"/>
    </location>
</feature>
<feature type="region of interest" description="Transcriptional activation domain" evidence="1">
    <location>
        <begin position="275"/>
        <end position="327"/>
    </location>
</feature>
<feature type="region of interest" description="Negative regulatory domain">
    <location>
        <begin position="328"/>
        <end position="460"/>
    </location>
</feature>
<feature type="region of interest" description="Disordered" evidence="4">
    <location>
        <begin position="337"/>
        <end position="368"/>
    </location>
</feature>
<feature type="region of interest" description="Leucine-zipper">
    <location>
        <begin position="375"/>
        <end position="396"/>
    </location>
</feature>
<feature type="modified residue" description="N6-acetyllysine" evidence="2">
    <location>
        <position position="467"/>
    </location>
</feature>
<feature type="modified residue" description="N6-acetyllysine; alternate" evidence="2">
    <location>
        <position position="476"/>
    </location>
</feature>
<feature type="modified residue" description="Phosphoserine" evidence="2">
    <location>
        <position position="528"/>
    </location>
</feature>
<feature type="modified residue" description="Phosphothreonine" evidence="2">
    <location>
        <position position="530"/>
    </location>
</feature>
<feature type="cross-link" description="Glycyl lysine isopeptide (Lys-Gly) (interchain with G-Cter in SUMO2); alternate" evidence="2">
    <location>
        <position position="476"/>
    </location>
</feature>
<feature type="cross-link" description="Glycyl lysine isopeptide (Lys-Gly) (interchain with G-Cter in SUMO1)" evidence="7">
    <location>
        <position position="499"/>
    </location>
</feature>
<feature type="cross-link" description="Glycyl lysine isopeptide (Lys-Gly) (interchain with G-Cter in SUMO1)" evidence="7">
    <location>
        <position position="523"/>
    </location>
</feature>
<feature type="mutagenesis site" description="Complete loss of TRAF7-mediated SUMOylatiom; when associated with R-523." evidence="7">
    <original>K</original>
    <variation>R</variation>
    <location>
        <position position="499"/>
    </location>
</feature>
<feature type="mutagenesis site" description="Complete loss of TRAF7-mediated SUMOylatiom; when associated with R-499." evidence="7">
    <original>K</original>
    <variation>R</variation>
    <location>
        <position position="523"/>
    </location>
</feature>
<feature type="sequence conflict" description="In Ref. 2; CAA26552." evidence="11" ref="2">
    <original>E</original>
    <variation>K</variation>
    <location>
        <position position="105"/>
    </location>
</feature>
<feature type="sequence conflict" description="In Ref. 2; CAA26552." evidence="11" ref="2">
    <original>E</original>
    <variation>K</variation>
    <location>
        <position position="201"/>
    </location>
</feature>
<feature type="sequence conflict" description="In Ref. 1; AAB59713." evidence="11" ref="1">
    <original>V</original>
    <variation>A</variation>
    <location>
        <position position="267"/>
    </location>
</feature>
<feature type="sequence conflict" description="In Ref. 10; AAA39786." evidence="11" ref="10">
    <original>F</original>
    <variation>V</variation>
    <location>
        <position position="402"/>
    </location>
</feature>
<feature type="sequence conflict" description="In Ref. 2; CAA26552." evidence="11" ref="2">
    <original>S</original>
    <variation>N</variation>
    <location>
        <position position="411"/>
    </location>
</feature>
<feature type="sequence conflict" description="In Ref. 2; CAA26552 and 6; AAH11513." evidence="11" ref="2 6">
    <original>Q</original>
    <variation>R</variation>
    <location>
        <position position="500"/>
    </location>
</feature>
<feature type="sequence conflict" description="In Ref. 2; CAA26552." evidence="11" ref="2">
    <original>E</original>
    <variation>A</variation>
    <location>
        <position position="525"/>
    </location>
</feature>
<feature type="helix" evidence="12">
    <location>
        <begin position="45"/>
        <end position="58"/>
    </location>
</feature>
<feature type="helix" evidence="12">
    <location>
        <begin position="63"/>
        <end position="68"/>
    </location>
</feature>
<feature type="helix" evidence="12">
    <location>
        <begin position="75"/>
        <end position="86"/>
    </location>
</feature>
<feature type="strand" evidence="16">
    <location>
        <begin position="92"/>
        <end position="94"/>
    </location>
</feature>
<feature type="helix" evidence="14">
    <location>
        <begin position="97"/>
        <end position="110"/>
    </location>
</feature>
<feature type="helix" evidence="14">
    <location>
        <begin position="115"/>
        <end position="119"/>
    </location>
</feature>
<feature type="helix" evidence="14">
    <location>
        <begin position="127"/>
        <end position="136"/>
    </location>
</feature>
<feature type="strand" evidence="18">
    <location>
        <begin position="140"/>
        <end position="142"/>
    </location>
</feature>
<feature type="strand" evidence="17">
    <location>
        <begin position="144"/>
        <end position="146"/>
    </location>
</feature>
<feature type="helix" evidence="13">
    <location>
        <begin position="149"/>
        <end position="162"/>
    </location>
</feature>
<feature type="helix" evidence="19">
    <location>
        <begin position="163"/>
        <end position="165"/>
    </location>
</feature>
<feature type="helix" evidence="13">
    <location>
        <begin position="166"/>
        <end position="170"/>
    </location>
</feature>
<feature type="strand" evidence="17">
    <location>
        <begin position="173"/>
        <end position="175"/>
    </location>
</feature>
<feature type="helix" evidence="13">
    <location>
        <begin position="178"/>
        <end position="188"/>
    </location>
</feature>
<feature type="helix" evidence="15">
    <location>
        <begin position="189"/>
        <end position="191"/>
    </location>
</feature>
<feature type="helix" evidence="20">
    <location>
        <begin position="291"/>
        <end position="303"/>
    </location>
</feature>
<feature type="helix" evidence="20">
    <location>
        <begin position="305"/>
        <end position="308"/>
    </location>
</feature>
<keyword id="KW-0002">3D-structure</keyword>
<keyword id="KW-0007">Acetylation</keyword>
<keyword id="KW-0010">Activator</keyword>
<keyword id="KW-0238">DNA-binding</keyword>
<keyword id="KW-1017">Isopeptide bond</keyword>
<keyword id="KW-0539">Nucleus</keyword>
<keyword id="KW-0597">Phosphoprotein</keyword>
<keyword id="KW-0656">Proto-oncogene</keyword>
<keyword id="KW-1185">Reference proteome</keyword>
<keyword id="KW-0677">Repeat</keyword>
<keyword id="KW-0804">Transcription</keyword>
<keyword id="KW-0805">Transcription regulation</keyword>
<keyword id="KW-0832">Ubl conjugation</keyword>
<name>MYB_MOUSE</name>
<dbReference type="EMBL" id="M21169">
    <property type="protein sequence ID" value="AAA39782.1"/>
    <property type="molecule type" value="Genomic_DNA"/>
</dbReference>
<dbReference type="EMBL" id="M12848">
    <property type="protein sequence ID" value="AAB59713.1"/>
    <property type="molecule type" value="mRNA"/>
</dbReference>
<dbReference type="EMBL" id="X02774">
    <property type="protein sequence ID" value="CAA26552.1"/>
    <property type="molecule type" value="mRNA"/>
</dbReference>
<dbReference type="EMBL" id="M20210">
    <property type="protein sequence ID" value="AAA39783.1"/>
    <property type="molecule type" value="Genomic_DNA"/>
</dbReference>
<dbReference type="EMBL" id="AC153556">
    <property type="status" value="NOT_ANNOTATED_CDS"/>
    <property type="molecule type" value="Genomic_DNA"/>
</dbReference>
<dbReference type="EMBL" id="BC011513">
    <property type="protein sequence ID" value="AAH11513.1"/>
    <property type="molecule type" value="mRNA"/>
</dbReference>
<dbReference type="EMBL" id="X04099">
    <property type="protein sequence ID" value="CAA27724.1"/>
    <property type="molecule type" value="Genomic_DNA"/>
</dbReference>
<dbReference type="EMBL" id="X04100">
    <property type="protein sequence ID" value="CAA27724.1"/>
    <property type="status" value="JOINED"/>
    <property type="molecule type" value="Genomic_DNA"/>
</dbReference>
<dbReference type="EMBL" id="X04101">
    <property type="protein sequence ID" value="CAA27724.1"/>
    <property type="status" value="JOINED"/>
    <property type="molecule type" value="Genomic_DNA"/>
</dbReference>
<dbReference type="EMBL" id="X04102">
    <property type="protein sequence ID" value="CAA27724.1"/>
    <property type="status" value="JOINED"/>
    <property type="molecule type" value="Genomic_DNA"/>
</dbReference>
<dbReference type="EMBL" id="X04103">
    <property type="protein sequence ID" value="CAA27724.1"/>
    <property type="status" value="JOINED"/>
    <property type="molecule type" value="Genomic_DNA"/>
</dbReference>
<dbReference type="EMBL" id="X04104">
    <property type="protein sequence ID" value="CAA27724.1"/>
    <property type="status" value="JOINED"/>
    <property type="molecule type" value="Genomic_DNA"/>
</dbReference>
<dbReference type="EMBL" id="X16389">
    <property type="protein sequence ID" value="CAA34425.1"/>
    <property type="molecule type" value="Genomic_DNA"/>
</dbReference>
<dbReference type="EMBL" id="X16390">
    <property type="protein sequence ID" value="CAA34426.1"/>
    <property type="molecule type" value="Genomic_DNA"/>
</dbReference>
<dbReference type="EMBL" id="M13989">
    <property type="protein sequence ID" value="AAA39787.1"/>
    <property type="molecule type" value="Genomic_DNA"/>
</dbReference>
<dbReference type="EMBL" id="K03547">
    <property type="protein sequence ID" value="AAA39786.1"/>
    <property type="molecule type" value="Genomic_DNA"/>
</dbReference>
<dbReference type="CCDS" id="CCDS35861.1"/>
<dbReference type="PIR" id="A25285">
    <property type="entry name" value="TVMSMB"/>
</dbReference>
<dbReference type="RefSeq" id="NP_001185843.1">
    <property type="nucleotide sequence ID" value="NM_001198914.1"/>
</dbReference>
<dbReference type="RefSeq" id="NP_034978.3">
    <property type="nucleotide sequence ID" value="NM_010848.3"/>
</dbReference>
<dbReference type="PDB" id="1GUU">
    <property type="method" value="X-ray"/>
    <property type="resolution" value="1.60 A"/>
    <property type="chains" value="A=38-89"/>
</dbReference>
<dbReference type="PDB" id="1GV2">
    <property type="method" value="X-ray"/>
    <property type="resolution" value="1.68 A"/>
    <property type="chains" value="A=89-193"/>
</dbReference>
<dbReference type="PDB" id="1GV5">
    <property type="method" value="X-ray"/>
    <property type="resolution" value="1.58 A"/>
    <property type="chains" value="A=90-141"/>
</dbReference>
<dbReference type="PDB" id="1GVD">
    <property type="method" value="X-ray"/>
    <property type="resolution" value="1.45 A"/>
    <property type="chains" value="A=90-141"/>
</dbReference>
<dbReference type="PDB" id="1H88">
    <property type="method" value="X-ray"/>
    <property type="resolution" value="2.80 A"/>
    <property type="chains" value="C=37-193"/>
</dbReference>
<dbReference type="PDB" id="1H89">
    <property type="method" value="X-ray"/>
    <property type="resolution" value="2.45 A"/>
    <property type="chains" value="C=37-193"/>
</dbReference>
<dbReference type="PDB" id="1IDY">
    <property type="method" value="NMR"/>
    <property type="chains" value="A=141-193"/>
</dbReference>
<dbReference type="PDB" id="1IDZ">
    <property type="method" value="NMR"/>
    <property type="chains" value="A=141-193"/>
</dbReference>
<dbReference type="PDB" id="1MBE">
    <property type="method" value="NMR"/>
    <property type="chains" value="A=38-89"/>
</dbReference>
<dbReference type="PDB" id="1MBF">
    <property type="method" value="NMR"/>
    <property type="chains" value="A=38-89"/>
</dbReference>
<dbReference type="PDB" id="1MBG">
    <property type="method" value="NMR"/>
    <property type="chains" value="A=90-141"/>
</dbReference>
<dbReference type="PDB" id="1MBH">
    <property type="method" value="NMR"/>
    <property type="chains" value="A=90-141"/>
</dbReference>
<dbReference type="PDB" id="1MBJ">
    <property type="method" value="NMR"/>
    <property type="chains" value="A=142-193"/>
</dbReference>
<dbReference type="PDB" id="1MBK">
    <property type="method" value="NMR"/>
    <property type="chains" value="A=142-193"/>
</dbReference>
<dbReference type="PDB" id="1MSE">
    <property type="method" value="NMR"/>
    <property type="chains" value="C=90-193"/>
</dbReference>
<dbReference type="PDB" id="1MSF">
    <property type="method" value="NMR"/>
    <property type="chains" value="C=90-193"/>
</dbReference>
<dbReference type="PDB" id="1SB0">
    <property type="method" value="NMR"/>
    <property type="chains" value="B=291-315"/>
</dbReference>
<dbReference type="PDB" id="2AGH">
    <property type="method" value="NMR"/>
    <property type="chains" value="A=291-315"/>
</dbReference>
<dbReference type="PDB" id="6DMX">
    <property type="method" value="X-ray"/>
    <property type="resolution" value="2.80 A"/>
    <property type="chains" value="A/C/F/H=284-315"/>
</dbReference>
<dbReference type="PDB" id="6DNQ">
    <property type="method" value="X-ray"/>
    <property type="resolution" value="2.35 A"/>
    <property type="chains" value="A/C=284-315"/>
</dbReference>
<dbReference type="PDBsum" id="1GUU"/>
<dbReference type="PDBsum" id="1GV2"/>
<dbReference type="PDBsum" id="1GV5"/>
<dbReference type="PDBsum" id="1GVD"/>
<dbReference type="PDBsum" id="1H88"/>
<dbReference type="PDBsum" id="1H89"/>
<dbReference type="PDBsum" id="1IDY"/>
<dbReference type="PDBsum" id="1IDZ"/>
<dbReference type="PDBsum" id="1MBE"/>
<dbReference type="PDBsum" id="1MBF"/>
<dbReference type="PDBsum" id="1MBG"/>
<dbReference type="PDBsum" id="1MBH"/>
<dbReference type="PDBsum" id="1MBJ"/>
<dbReference type="PDBsum" id="1MBK"/>
<dbReference type="PDBsum" id="1MSE"/>
<dbReference type="PDBsum" id="1MSF"/>
<dbReference type="PDBsum" id="1SB0"/>
<dbReference type="PDBsum" id="2AGH"/>
<dbReference type="PDBsum" id="6DMX"/>
<dbReference type="PDBsum" id="6DNQ"/>
<dbReference type="BMRB" id="P06876"/>
<dbReference type="SMR" id="P06876"/>
<dbReference type="BioGRID" id="201631">
    <property type="interactions" value="12"/>
</dbReference>
<dbReference type="ComplexPortal" id="CPX-685">
    <property type="entry name" value="c-Myb-C/EBPbeta complex"/>
</dbReference>
<dbReference type="DIP" id="DIP-31713N"/>
<dbReference type="ELM" id="P06876"/>
<dbReference type="FunCoup" id="P06876">
    <property type="interactions" value="3338"/>
</dbReference>
<dbReference type="IntAct" id="P06876">
    <property type="interactions" value="4"/>
</dbReference>
<dbReference type="STRING" id="10090.ENSMUSP00000139699"/>
<dbReference type="GlyGen" id="P06876">
    <property type="glycosylation" value="1 site, 1 O-linked glycan (1 site)"/>
</dbReference>
<dbReference type="iPTMnet" id="P06876"/>
<dbReference type="PhosphoSitePlus" id="P06876"/>
<dbReference type="jPOST" id="P06876"/>
<dbReference type="PaxDb" id="10090-ENSMUSP00000020158"/>
<dbReference type="ProteomicsDB" id="293592"/>
<dbReference type="Antibodypedia" id="4486">
    <property type="antibodies" value="941 antibodies from 43 providers"/>
</dbReference>
<dbReference type="DNASU" id="17863"/>
<dbReference type="Ensembl" id="ENSMUST00000020158.9">
    <property type="protein sequence ID" value="ENSMUSP00000020158.7"/>
    <property type="gene ID" value="ENSMUSG00000019982.16"/>
</dbReference>
<dbReference type="GeneID" id="17863"/>
<dbReference type="KEGG" id="mmu:17863"/>
<dbReference type="UCSC" id="uc007eog.1">
    <property type="organism name" value="mouse"/>
</dbReference>
<dbReference type="AGR" id="MGI:97249"/>
<dbReference type="CTD" id="4602"/>
<dbReference type="MGI" id="MGI:97249">
    <property type="gene designation" value="Myb"/>
</dbReference>
<dbReference type="VEuPathDB" id="HostDB:ENSMUSG00000019982"/>
<dbReference type="eggNOG" id="KOG0048">
    <property type="taxonomic scope" value="Eukaryota"/>
</dbReference>
<dbReference type="GeneTree" id="ENSGT00940000156248"/>
<dbReference type="HOGENOM" id="CLU_015440_2_2_1"/>
<dbReference type="InParanoid" id="P06876"/>
<dbReference type="OrthoDB" id="2143914at2759"/>
<dbReference type="TreeFam" id="TF326257"/>
<dbReference type="BioGRID-ORCS" id="17863">
    <property type="hits" value="11 hits in 84 CRISPR screens"/>
</dbReference>
<dbReference type="EvolutionaryTrace" id="P06876"/>
<dbReference type="PRO" id="PR:P06876"/>
<dbReference type="Proteomes" id="UP000000589">
    <property type="component" value="Chromosome 10"/>
</dbReference>
<dbReference type="RNAct" id="P06876">
    <property type="molecule type" value="protein"/>
</dbReference>
<dbReference type="Bgee" id="ENSMUSG00000019982">
    <property type="expression patterns" value="Expressed in thymus and 208 other cell types or tissues"/>
</dbReference>
<dbReference type="ExpressionAtlas" id="P06876">
    <property type="expression patterns" value="baseline and differential"/>
</dbReference>
<dbReference type="GO" id="GO:0005829">
    <property type="term" value="C:cytosol"/>
    <property type="evidence" value="ECO:0000314"/>
    <property type="project" value="MGI"/>
</dbReference>
<dbReference type="GO" id="GO:0005654">
    <property type="term" value="C:nucleoplasm"/>
    <property type="evidence" value="ECO:0000304"/>
    <property type="project" value="Reactome"/>
</dbReference>
<dbReference type="GO" id="GO:0005634">
    <property type="term" value="C:nucleus"/>
    <property type="evidence" value="ECO:0000314"/>
    <property type="project" value="MGI"/>
</dbReference>
<dbReference type="GO" id="GO:0090575">
    <property type="term" value="C:RNA polymerase II transcription regulator complex"/>
    <property type="evidence" value="ECO:0000269"/>
    <property type="project" value="ComplexPortal"/>
</dbReference>
<dbReference type="GO" id="GO:0003677">
    <property type="term" value="F:DNA binding"/>
    <property type="evidence" value="ECO:0000314"/>
    <property type="project" value="MGI"/>
</dbReference>
<dbReference type="GO" id="GO:0001228">
    <property type="term" value="F:DNA-binding transcription activator activity, RNA polymerase II-specific"/>
    <property type="evidence" value="ECO:0000314"/>
    <property type="project" value="NTNU_SB"/>
</dbReference>
<dbReference type="GO" id="GO:0003700">
    <property type="term" value="F:DNA-binding transcription factor activity"/>
    <property type="evidence" value="ECO:0000314"/>
    <property type="project" value="MGI"/>
</dbReference>
<dbReference type="GO" id="GO:0000978">
    <property type="term" value="F:RNA polymerase II cis-regulatory region sequence-specific DNA binding"/>
    <property type="evidence" value="ECO:0000314"/>
    <property type="project" value="NTNU_SB"/>
</dbReference>
<dbReference type="GO" id="GO:0071987">
    <property type="term" value="F:WD40-repeat domain binding"/>
    <property type="evidence" value="ECO:0000314"/>
    <property type="project" value="MGI"/>
</dbReference>
<dbReference type="GO" id="GO:0030183">
    <property type="term" value="P:B cell differentiation"/>
    <property type="evidence" value="ECO:0000315"/>
    <property type="project" value="MGI"/>
</dbReference>
<dbReference type="GO" id="GO:0006816">
    <property type="term" value="P:calcium ion transport"/>
    <property type="evidence" value="ECO:0000315"/>
    <property type="project" value="MGI"/>
</dbReference>
<dbReference type="GO" id="GO:0070301">
    <property type="term" value="P:cellular response to hydrogen peroxide"/>
    <property type="evidence" value="ECO:0007669"/>
    <property type="project" value="Ensembl"/>
</dbReference>
<dbReference type="GO" id="GO:0071354">
    <property type="term" value="P:cellular response to interleukin-6"/>
    <property type="evidence" value="ECO:0000314"/>
    <property type="project" value="MGI"/>
</dbReference>
<dbReference type="GO" id="GO:1990830">
    <property type="term" value="P:cellular response to leukemia inhibitory factor"/>
    <property type="evidence" value="ECO:0000270"/>
    <property type="project" value="MGI"/>
</dbReference>
<dbReference type="GO" id="GO:0071300">
    <property type="term" value="P:cellular response to retinoic acid"/>
    <property type="evidence" value="ECO:0007669"/>
    <property type="project" value="Ensembl"/>
</dbReference>
<dbReference type="GO" id="GO:0048566">
    <property type="term" value="P:embryonic digestive tract development"/>
    <property type="evidence" value="ECO:0000315"/>
    <property type="project" value="MGI"/>
</dbReference>
<dbReference type="GO" id="GO:0030218">
    <property type="term" value="P:erythrocyte differentiation"/>
    <property type="evidence" value="ECO:0007669"/>
    <property type="project" value="Ensembl"/>
</dbReference>
<dbReference type="GO" id="GO:0000082">
    <property type="term" value="P:G1/S transition of mitotic cell cycle"/>
    <property type="evidence" value="ECO:0000315"/>
    <property type="project" value="MGI"/>
</dbReference>
<dbReference type="GO" id="GO:0048872">
    <property type="term" value="P:homeostasis of number of cells"/>
    <property type="evidence" value="ECO:0000315"/>
    <property type="project" value="MGI"/>
</dbReference>
<dbReference type="GO" id="GO:0001701">
    <property type="term" value="P:in utero embryonic development"/>
    <property type="evidence" value="ECO:0000315"/>
    <property type="project" value="MGI"/>
</dbReference>
<dbReference type="GO" id="GO:0061515">
    <property type="term" value="P:myeloid cell development"/>
    <property type="evidence" value="ECO:0000303"/>
    <property type="project" value="ComplexPortal"/>
</dbReference>
<dbReference type="GO" id="GO:0030099">
    <property type="term" value="P:myeloid cell differentiation"/>
    <property type="evidence" value="ECO:0000315"/>
    <property type="project" value="MGI"/>
</dbReference>
<dbReference type="GO" id="GO:1901533">
    <property type="term" value="P:negative regulation of hematopoietic progenitor cell differentiation"/>
    <property type="evidence" value="ECO:0007669"/>
    <property type="project" value="Ensembl"/>
</dbReference>
<dbReference type="GO" id="GO:0045653">
    <property type="term" value="P:negative regulation of megakaryocyte differentiation"/>
    <property type="evidence" value="ECO:0007669"/>
    <property type="project" value="Ensembl"/>
</dbReference>
<dbReference type="GO" id="GO:0000122">
    <property type="term" value="P:negative regulation of transcription by RNA polymerase II"/>
    <property type="evidence" value="ECO:0007669"/>
    <property type="project" value="Ensembl"/>
</dbReference>
<dbReference type="GO" id="GO:0032967">
    <property type="term" value="P:positive regulation of collagen biosynthetic process"/>
    <property type="evidence" value="ECO:0007669"/>
    <property type="project" value="Ensembl"/>
</dbReference>
<dbReference type="GO" id="GO:0060252">
    <property type="term" value="P:positive regulation of glial cell proliferation"/>
    <property type="evidence" value="ECO:0007669"/>
    <property type="project" value="Ensembl"/>
</dbReference>
<dbReference type="GO" id="GO:2000491">
    <property type="term" value="P:positive regulation of hepatic stellate cell activation"/>
    <property type="evidence" value="ECO:0007669"/>
    <property type="project" value="Ensembl"/>
</dbReference>
<dbReference type="GO" id="GO:1904899">
    <property type="term" value="P:positive regulation of hepatic stellate cell proliferation"/>
    <property type="evidence" value="ECO:0007669"/>
    <property type="project" value="Ensembl"/>
</dbReference>
<dbReference type="GO" id="GO:1902895">
    <property type="term" value="P:positive regulation of miRNA transcription"/>
    <property type="evidence" value="ECO:0007669"/>
    <property type="project" value="Ensembl"/>
</dbReference>
<dbReference type="GO" id="GO:0043525">
    <property type="term" value="P:positive regulation of neuron apoptotic process"/>
    <property type="evidence" value="ECO:0007669"/>
    <property type="project" value="Ensembl"/>
</dbReference>
<dbReference type="GO" id="GO:0048661">
    <property type="term" value="P:positive regulation of smooth muscle cell proliferation"/>
    <property type="evidence" value="ECO:0007669"/>
    <property type="project" value="Ensembl"/>
</dbReference>
<dbReference type="GO" id="GO:2000845">
    <property type="term" value="P:positive regulation of testosterone secretion"/>
    <property type="evidence" value="ECO:0007669"/>
    <property type="project" value="Ensembl"/>
</dbReference>
<dbReference type="GO" id="GO:0045944">
    <property type="term" value="P:positive regulation of transcription by RNA polymerase II"/>
    <property type="evidence" value="ECO:0000314"/>
    <property type="project" value="NTNU_SB"/>
</dbReference>
<dbReference type="GO" id="GO:0071636">
    <property type="term" value="P:positive regulation of transforming growth factor beta production"/>
    <property type="evidence" value="ECO:0007669"/>
    <property type="project" value="Ensembl"/>
</dbReference>
<dbReference type="GO" id="GO:0006355">
    <property type="term" value="P:regulation of DNA-templated transcription"/>
    <property type="evidence" value="ECO:0000314"/>
    <property type="project" value="MGI"/>
</dbReference>
<dbReference type="GO" id="GO:0010468">
    <property type="term" value="P:regulation of gene expression"/>
    <property type="evidence" value="ECO:0000315"/>
    <property type="project" value="MGI"/>
</dbReference>
<dbReference type="GO" id="GO:0001666">
    <property type="term" value="P:response to hypoxia"/>
    <property type="evidence" value="ECO:0007669"/>
    <property type="project" value="Ensembl"/>
</dbReference>
<dbReference type="GO" id="GO:0002931">
    <property type="term" value="P:response to ischemia"/>
    <property type="evidence" value="ECO:0007669"/>
    <property type="project" value="Ensembl"/>
</dbReference>
<dbReference type="GO" id="GO:0014856">
    <property type="term" value="P:skeletal muscle cell proliferation"/>
    <property type="evidence" value="ECO:0007669"/>
    <property type="project" value="Ensembl"/>
</dbReference>
<dbReference type="GO" id="GO:0048536">
    <property type="term" value="P:spleen development"/>
    <property type="evidence" value="ECO:0000315"/>
    <property type="project" value="MGI"/>
</dbReference>
<dbReference type="GO" id="GO:0017145">
    <property type="term" value="P:stem cell division"/>
    <property type="evidence" value="ECO:0000315"/>
    <property type="project" value="MGI"/>
</dbReference>
<dbReference type="GO" id="GO:0045064">
    <property type="term" value="P:T-helper 2 cell differentiation"/>
    <property type="evidence" value="ECO:0007669"/>
    <property type="project" value="Ensembl"/>
</dbReference>
<dbReference type="GO" id="GO:0048538">
    <property type="term" value="P:thymus development"/>
    <property type="evidence" value="ECO:0000315"/>
    <property type="project" value="MGI"/>
</dbReference>
<dbReference type="CDD" id="cd00167">
    <property type="entry name" value="SANT"/>
    <property type="match status" value="3"/>
</dbReference>
<dbReference type="FunFam" id="1.10.10.60:FF:000010">
    <property type="entry name" value="Transcriptional activator Myb isoform A"/>
    <property type="match status" value="1"/>
</dbReference>
<dbReference type="FunFam" id="1.10.10.60:FF:000016">
    <property type="entry name" value="Transcriptional activator Myb isoform A"/>
    <property type="match status" value="1"/>
</dbReference>
<dbReference type="FunFam" id="1.10.10.60:FF:000042">
    <property type="entry name" value="Transcriptional activator Myb isoform A"/>
    <property type="match status" value="1"/>
</dbReference>
<dbReference type="Gene3D" id="1.10.10.60">
    <property type="entry name" value="Homeodomain-like"/>
    <property type="match status" value="3"/>
</dbReference>
<dbReference type="InterPro" id="IPR015395">
    <property type="entry name" value="C-myb_C"/>
</dbReference>
<dbReference type="InterPro" id="IPR009057">
    <property type="entry name" value="Homeodomain-like_sf"/>
</dbReference>
<dbReference type="InterPro" id="IPR017930">
    <property type="entry name" value="Myb_dom"/>
</dbReference>
<dbReference type="InterPro" id="IPR050560">
    <property type="entry name" value="MYB_TF"/>
</dbReference>
<dbReference type="InterPro" id="IPR001005">
    <property type="entry name" value="SANT/Myb"/>
</dbReference>
<dbReference type="InterPro" id="IPR012642">
    <property type="entry name" value="Tscrpt_reg_Wos2-domain"/>
</dbReference>
<dbReference type="PANTHER" id="PTHR45614">
    <property type="entry name" value="MYB PROTEIN-RELATED"/>
    <property type="match status" value="1"/>
</dbReference>
<dbReference type="Pfam" id="PF09316">
    <property type="entry name" value="Cmyb_C"/>
    <property type="match status" value="1"/>
</dbReference>
<dbReference type="Pfam" id="PF07988">
    <property type="entry name" value="LMSTEN"/>
    <property type="match status" value="1"/>
</dbReference>
<dbReference type="Pfam" id="PF00249">
    <property type="entry name" value="Myb_DNA-binding"/>
    <property type="match status" value="3"/>
</dbReference>
<dbReference type="SMART" id="SM00717">
    <property type="entry name" value="SANT"/>
    <property type="match status" value="3"/>
</dbReference>
<dbReference type="SUPFAM" id="SSF46689">
    <property type="entry name" value="Homeodomain-like"/>
    <property type="match status" value="2"/>
</dbReference>
<dbReference type="PROSITE" id="PS51294">
    <property type="entry name" value="HTH_MYB"/>
    <property type="match status" value="3"/>
</dbReference>
<evidence type="ECO:0000250" key="1"/>
<evidence type="ECO:0000250" key="2">
    <source>
        <dbReference type="UniProtKB" id="P10242"/>
    </source>
</evidence>
<evidence type="ECO:0000255" key="3">
    <source>
        <dbReference type="PROSITE-ProRule" id="PRU00625"/>
    </source>
</evidence>
<evidence type="ECO:0000256" key="4">
    <source>
        <dbReference type="SAM" id="MobiDB-lite"/>
    </source>
</evidence>
<evidence type="ECO:0000269" key="5">
    <source>
    </source>
</evidence>
<evidence type="ECO:0000269" key="6">
    <source>
    </source>
</evidence>
<evidence type="ECO:0000269" key="7">
    <source>
    </source>
</evidence>
<evidence type="ECO:0000269" key="8">
    <source>
    </source>
</evidence>
<evidence type="ECO:0000269" key="9">
    <source>
    </source>
</evidence>
<evidence type="ECO:0000269" key="10">
    <source>
    </source>
</evidence>
<evidence type="ECO:0000305" key="11"/>
<evidence type="ECO:0007829" key="12">
    <source>
        <dbReference type="PDB" id="1GUU"/>
    </source>
</evidence>
<evidence type="ECO:0007829" key="13">
    <source>
        <dbReference type="PDB" id="1GV2"/>
    </source>
</evidence>
<evidence type="ECO:0007829" key="14">
    <source>
        <dbReference type="PDB" id="1GVD"/>
    </source>
</evidence>
<evidence type="ECO:0007829" key="15">
    <source>
        <dbReference type="PDB" id="1IDY"/>
    </source>
</evidence>
<evidence type="ECO:0007829" key="16">
    <source>
        <dbReference type="PDB" id="1MBH"/>
    </source>
</evidence>
<evidence type="ECO:0007829" key="17">
    <source>
        <dbReference type="PDB" id="1MBK"/>
    </source>
</evidence>
<evidence type="ECO:0007829" key="18">
    <source>
        <dbReference type="PDB" id="1MSE"/>
    </source>
</evidence>
<evidence type="ECO:0007829" key="19">
    <source>
        <dbReference type="PDB" id="1MSF"/>
    </source>
</evidence>
<evidence type="ECO:0007829" key="20">
    <source>
        <dbReference type="PDB" id="6DNQ"/>
    </source>
</evidence>
<comment type="function">
    <text evidence="7">Transcriptional activator; DNA-binding protein that specifically recognize the sequence 5'-YAAC[GT]G-3'. Plays an important role in the control of proliferation and differentiation of hematopoietic progenitor cells.</text>
</comment>
<comment type="subunit">
    <text evidence="1 5 6 8 9 10">Binds to HIPK1 (By similarity). Interacts with HIPK2, MAF, MYBBP1A and NLK.</text>
</comment>
<comment type="interaction">
    <interactant intactId="EBI-366934">
        <id>P06876</id>
    </interactant>
    <interactant intactId="EBI-366905">
        <id>Q9QZR5</id>
        <label>Hipk2</label>
    </interactant>
    <organismsDiffer>false</organismsDiffer>
    <experiments>2</experiments>
</comment>
<comment type="interaction">
    <interactant intactId="EBI-366934">
        <id>P06876</id>
    </interactant>
    <interactant intactId="EBI-16212976">
        <id>P38531</id>
        <label>HSF3</label>
    </interactant>
    <organismsDiffer>true</organismsDiffer>
    <experiments>2</experiments>
</comment>
<comment type="subcellular location">
    <subcellularLocation>
        <location evidence="7">Nucleus</location>
    </subcellularLocation>
</comment>
<comment type="domain">
    <text>Comprised of 3 domains; an N-terminal DNA-binding domain, a centrally located transcriptional activation domain and a C-terminal domain involved in transcriptional repression.</text>
</comment>
<comment type="domain">
    <text>C-terminal truncated mutants display increased transactivation.</text>
</comment>
<comment type="PTM">
    <text evidence="7">SUMOylated by TRAF7; leading to MYB transcriptional activity inhibition.</text>
</comment>
<comment type="PTM">
    <text evidence="1">Ubiquitinated; mediated by SIAH1 and leading to its subsequent proteasomal degradation.</text>
</comment>
<comment type="PTM">
    <text>Phosphorylated by NLK on multiple sites, which induces proteasomal degradation.</text>
</comment>
<comment type="PTM">
    <text evidence="1">Phosphorylated by HIPK1. This phosphorylation reduces MYB transcription factor activity but not MYB protein levels (By similarity).</text>
</comment>
<protein>
    <recommendedName>
        <fullName>Transcriptional activator Myb</fullName>
    </recommendedName>
    <alternativeName>
        <fullName>Proto-oncogene c-Myb</fullName>
    </alternativeName>
</protein>
<organism>
    <name type="scientific">Mus musculus</name>
    <name type="common">Mouse</name>
    <dbReference type="NCBI Taxonomy" id="10090"/>
    <lineage>
        <taxon>Eukaryota</taxon>
        <taxon>Metazoa</taxon>
        <taxon>Chordata</taxon>
        <taxon>Craniata</taxon>
        <taxon>Vertebrata</taxon>
        <taxon>Euteleostomi</taxon>
        <taxon>Mammalia</taxon>
        <taxon>Eutheria</taxon>
        <taxon>Euarchontoglires</taxon>
        <taxon>Glires</taxon>
        <taxon>Rodentia</taxon>
        <taxon>Myomorpha</taxon>
        <taxon>Muroidea</taxon>
        <taxon>Muridae</taxon>
        <taxon>Murinae</taxon>
        <taxon>Mus</taxon>
        <taxon>Mus</taxon>
    </lineage>
</organism>
<proteinExistence type="evidence at protein level"/>
<accession>P06876</accession>
<accession>E9QMG8</accession>
<accession>Q61929</accession>